<reference key="1">
    <citation type="journal article" date="1998" name="DNA Res.">
        <title>Complete sequence and gene organization of the genome of a hyper-thermophilic archaebacterium, Pyrococcus horikoshii OT3.</title>
        <authorList>
            <person name="Kawarabayasi Y."/>
            <person name="Sawada M."/>
            <person name="Horikawa H."/>
            <person name="Haikawa Y."/>
            <person name="Hino Y."/>
            <person name="Yamamoto S."/>
            <person name="Sekine M."/>
            <person name="Baba S."/>
            <person name="Kosugi H."/>
            <person name="Hosoyama A."/>
            <person name="Nagai Y."/>
            <person name="Sakai M."/>
            <person name="Ogura K."/>
            <person name="Otsuka R."/>
            <person name="Nakazawa H."/>
            <person name="Takamiya M."/>
            <person name="Ohfuku Y."/>
            <person name="Funahashi T."/>
            <person name="Tanaka T."/>
            <person name="Kudoh Y."/>
            <person name="Yamazaki J."/>
            <person name="Kushida N."/>
            <person name="Oguchi A."/>
            <person name="Aoki K."/>
            <person name="Yoshizawa T."/>
            <person name="Nakamura Y."/>
            <person name="Robb F.T."/>
            <person name="Horikoshi K."/>
            <person name="Masuchi Y."/>
            <person name="Shizuya H."/>
            <person name="Kikuchi H."/>
        </authorList>
    </citation>
    <scope>NUCLEOTIDE SEQUENCE [LARGE SCALE GENOMIC DNA]</scope>
    <source>
        <strain>ATCC 700860 / DSM 12428 / JCM 9974 / NBRC 100139 / OT-3</strain>
    </source>
</reference>
<keyword id="KW-0067">ATP-binding</keyword>
<keyword id="KW-0460">Magnesium</keyword>
<keyword id="KW-0479">Metal-binding</keyword>
<keyword id="KW-0547">Nucleotide-binding</keyword>
<keyword id="KW-0548">Nucleotidyltransferase</keyword>
<keyword id="KW-0692">RNA repair</keyword>
<keyword id="KW-0694">RNA-binding</keyword>
<keyword id="KW-0808">Transferase</keyword>
<keyword id="KW-0819">tRNA processing</keyword>
<comment type="function">
    <text evidence="1">Catalyzes the addition and repair of the essential 3'-terminal CCA sequence in tRNAs without using a nucleic acid template. Adds these three nucleotides in the order of C, C, and A to the tRNA nucleotide-73, using CTP and ATP as substrates and producing inorganic pyrophosphate. tRNA 3'-terminal CCA addition is required both for tRNA processing and repair. Also involved in tRNA surveillance by mediating tandem CCA addition to generate a CCACCA at the 3' terminus of unstable tRNAs. While stable tRNAs receive only 3'-terminal CCA, unstable tRNAs are marked with CCACCA and rapidly degraded.</text>
</comment>
<comment type="catalytic activity">
    <reaction evidence="1">
        <text>a tRNA precursor + 2 CTP + ATP = a tRNA with a 3' CCA end + 3 diphosphate</text>
        <dbReference type="Rhea" id="RHEA:14433"/>
        <dbReference type="Rhea" id="RHEA-COMP:10465"/>
        <dbReference type="Rhea" id="RHEA-COMP:10468"/>
        <dbReference type="ChEBI" id="CHEBI:30616"/>
        <dbReference type="ChEBI" id="CHEBI:33019"/>
        <dbReference type="ChEBI" id="CHEBI:37563"/>
        <dbReference type="ChEBI" id="CHEBI:74896"/>
        <dbReference type="ChEBI" id="CHEBI:83071"/>
        <dbReference type="EC" id="2.7.7.72"/>
    </reaction>
</comment>
<comment type="catalytic activity">
    <reaction evidence="1">
        <text>a tRNA with a 3' CCA end + 2 CTP + ATP = a tRNA with a 3' CCACCA end + 3 diphosphate</text>
        <dbReference type="Rhea" id="RHEA:76235"/>
        <dbReference type="Rhea" id="RHEA-COMP:10468"/>
        <dbReference type="Rhea" id="RHEA-COMP:18655"/>
        <dbReference type="ChEBI" id="CHEBI:30616"/>
        <dbReference type="ChEBI" id="CHEBI:33019"/>
        <dbReference type="ChEBI" id="CHEBI:37563"/>
        <dbReference type="ChEBI" id="CHEBI:83071"/>
        <dbReference type="ChEBI" id="CHEBI:195187"/>
    </reaction>
    <physiologicalReaction direction="left-to-right" evidence="1">
        <dbReference type="Rhea" id="RHEA:76236"/>
    </physiologicalReaction>
</comment>
<comment type="cofactor">
    <cofactor evidence="1">
        <name>Mg(2+)</name>
        <dbReference type="ChEBI" id="CHEBI:18420"/>
    </cofactor>
</comment>
<comment type="subunit">
    <text evidence="1">Homodimer.</text>
</comment>
<comment type="miscellaneous">
    <text evidence="1">A single active site specifically recognizes both ATP and CTP and is responsible for their addition.</text>
</comment>
<comment type="similarity">
    <text evidence="1">Belongs to the tRNA nucleotidyltransferase/poly(A) polymerase family. Archaeal CCA-adding enzyme subfamily.</text>
</comment>
<comment type="sequence caution" evidence="2">
    <conflict type="erroneous initiation">
        <sequence resource="EMBL-CDS" id="BAA29170"/>
    </conflict>
</comment>
<dbReference type="EC" id="2.7.7.72" evidence="1"/>
<dbReference type="EMBL" id="BA000001">
    <property type="protein sequence ID" value="BAA29170.1"/>
    <property type="status" value="ALT_INIT"/>
    <property type="molecule type" value="Genomic_DNA"/>
</dbReference>
<dbReference type="PIR" id="C71230">
    <property type="entry name" value="C71230"/>
</dbReference>
<dbReference type="RefSeq" id="WP_048053028.1">
    <property type="nucleotide sequence ID" value="NC_000961.1"/>
</dbReference>
<dbReference type="SMR" id="O74081"/>
<dbReference type="STRING" id="70601.gene:9377009"/>
<dbReference type="EnsemblBacteria" id="BAA29170">
    <property type="protein sequence ID" value="BAA29170"/>
    <property type="gene ID" value="BAA29170"/>
</dbReference>
<dbReference type="GeneID" id="1444003"/>
<dbReference type="KEGG" id="pho:PH0101"/>
<dbReference type="eggNOG" id="arCOG04249">
    <property type="taxonomic scope" value="Archaea"/>
</dbReference>
<dbReference type="OrthoDB" id="7378at2157"/>
<dbReference type="Proteomes" id="UP000000752">
    <property type="component" value="Chromosome"/>
</dbReference>
<dbReference type="GO" id="GO:0005524">
    <property type="term" value="F:ATP binding"/>
    <property type="evidence" value="ECO:0007669"/>
    <property type="project" value="UniProtKB-UniRule"/>
</dbReference>
<dbReference type="GO" id="GO:0004810">
    <property type="term" value="F:CCA tRNA nucleotidyltransferase activity"/>
    <property type="evidence" value="ECO:0007669"/>
    <property type="project" value="UniProtKB-UniRule"/>
</dbReference>
<dbReference type="GO" id="GO:0000287">
    <property type="term" value="F:magnesium ion binding"/>
    <property type="evidence" value="ECO:0007669"/>
    <property type="project" value="UniProtKB-UniRule"/>
</dbReference>
<dbReference type="GO" id="GO:0000049">
    <property type="term" value="F:tRNA binding"/>
    <property type="evidence" value="ECO:0007669"/>
    <property type="project" value="UniProtKB-UniRule"/>
</dbReference>
<dbReference type="GO" id="GO:0042245">
    <property type="term" value="P:RNA repair"/>
    <property type="evidence" value="ECO:0007669"/>
    <property type="project" value="UniProtKB-KW"/>
</dbReference>
<dbReference type="GO" id="GO:0001680">
    <property type="term" value="P:tRNA 3'-terminal CCA addition"/>
    <property type="evidence" value="ECO:0007669"/>
    <property type="project" value="UniProtKB-UniRule"/>
</dbReference>
<dbReference type="CDD" id="cd05400">
    <property type="entry name" value="NT_2-5OAS_ClassI-CCAase"/>
    <property type="match status" value="1"/>
</dbReference>
<dbReference type="Gene3D" id="3.30.70.1550">
    <property type="entry name" value="Archaeal tRNA CCA-adding enzyme catalytic domain"/>
    <property type="match status" value="1"/>
</dbReference>
<dbReference type="Gene3D" id="3.30.460.10">
    <property type="entry name" value="Beta Polymerase, domain 2"/>
    <property type="match status" value="1"/>
</dbReference>
<dbReference type="Gene3D" id="1.10.1410.30">
    <property type="entry name" value="CCA tRNA nucleotidyltransferase, domain 2"/>
    <property type="match status" value="1"/>
</dbReference>
<dbReference type="Gene3D" id="3.30.70.590">
    <property type="entry name" value="Poly(A) polymerase predicted RNA binding domain"/>
    <property type="match status" value="1"/>
</dbReference>
<dbReference type="HAMAP" id="MF_01264">
    <property type="entry name" value="CCA_arch"/>
    <property type="match status" value="1"/>
</dbReference>
<dbReference type="InterPro" id="IPR048833">
    <property type="entry name" value="CAA_C"/>
</dbReference>
<dbReference type="InterPro" id="IPR008229">
    <property type="entry name" value="CCA-adding_arc"/>
</dbReference>
<dbReference type="InterPro" id="IPR042090">
    <property type="entry name" value="CCA_tRNA_nucleotrans_2"/>
</dbReference>
<dbReference type="InterPro" id="IPR006116">
    <property type="entry name" value="NT_2-5OAS_ClassI-CCAase"/>
</dbReference>
<dbReference type="InterPro" id="IPR043519">
    <property type="entry name" value="NT_sf"/>
</dbReference>
<dbReference type="InterPro" id="IPR011068">
    <property type="entry name" value="NuclTrfase_I-like_C"/>
</dbReference>
<dbReference type="InterPro" id="IPR002934">
    <property type="entry name" value="Polymerase_NTP_transf_dom"/>
</dbReference>
<dbReference type="InterPro" id="IPR015329">
    <property type="entry name" value="tRNA_NucTransf2"/>
</dbReference>
<dbReference type="NCBIfam" id="TIGR03671">
    <property type="entry name" value="cca_archaeal"/>
    <property type="match status" value="1"/>
</dbReference>
<dbReference type="PANTHER" id="PTHR39643">
    <property type="entry name" value="CCA-ADDING ENZYME"/>
    <property type="match status" value="1"/>
</dbReference>
<dbReference type="PANTHER" id="PTHR39643:SF1">
    <property type="entry name" value="CCA-ADDING ENZYME"/>
    <property type="match status" value="1"/>
</dbReference>
<dbReference type="Pfam" id="PF21133">
    <property type="entry name" value="CAA_C"/>
    <property type="match status" value="1"/>
</dbReference>
<dbReference type="Pfam" id="PF01909">
    <property type="entry name" value="NTP_transf_2"/>
    <property type="match status" value="1"/>
</dbReference>
<dbReference type="Pfam" id="PF09249">
    <property type="entry name" value="tRNA_NucTransf2"/>
    <property type="match status" value="1"/>
</dbReference>
<dbReference type="PIRSF" id="PIRSF005335">
    <property type="entry name" value="CCA_arch"/>
    <property type="match status" value="1"/>
</dbReference>
<dbReference type="SUPFAM" id="SSF81301">
    <property type="entry name" value="Nucleotidyltransferase"/>
    <property type="match status" value="1"/>
</dbReference>
<dbReference type="SUPFAM" id="SSF55003">
    <property type="entry name" value="PAP/Archaeal CCA-adding enzyme, C-terminal domain"/>
    <property type="match status" value="1"/>
</dbReference>
<dbReference type="SUPFAM" id="SSF81631">
    <property type="entry name" value="PAP/OAS1 substrate-binding domain"/>
    <property type="match status" value="1"/>
</dbReference>
<protein>
    <recommendedName>
        <fullName evidence="1">CCA-adding enzyme</fullName>
        <ecNumber evidence="1">2.7.7.72</ecNumber>
    </recommendedName>
    <alternativeName>
        <fullName evidence="1">CCA tRNA nucleotidyltransferase</fullName>
    </alternativeName>
    <alternativeName>
        <fullName evidence="1">tRNA CCA-pyrophosphorylase</fullName>
    </alternativeName>
    <alternativeName>
        <fullName evidence="1">tRNA adenylyl-/cytidylyl- transferase</fullName>
    </alternativeName>
    <alternativeName>
        <fullName evidence="1">tRNA nucleotidyltransferase</fullName>
    </alternativeName>
    <alternativeName>
        <fullName evidence="1">tRNA-NT</fullName>
    </alternativeName>
</protein>
<accession>O74081</accession>
<accession>O57841</accession>
<proteinExistence type="inferred from homology"/>
<feature type="chain" id="PRO_0000139079" description="CCA-adding enzyme">
    <location>
        <begin position="1"/>
        <end position="449"/>
    </location>
</feature>
<feature type="binding site" evidence="1">
    <location>
        <position position="53"/>
    </location>
    <ligand>
        <name>ATP</name>
        <dbReference type="ChEBI" id="CHEBI:30616"/>
    </ligand>
</feature>
<feature type="binding site" evidence="1">
    <location>
        <position position="53"/>
    </location>
    <ligand>
        <name>CTP</name>
        <dbReference type="ChEBI" id="CHEBI:37563"/>
    </ligand>
</feature>
<feature type="binding site" evidence="1">
    <location>
        <position position="56"/>
    </location>
    <ligand>
        <name>ATP</name>
        <dbReference type="ChEBI" id="CHEBI:30616"/>
    </ligand>
</feature>
<feature type="binding site" evidence="1">
    <location>
        <position position="56"/>
    </location>
    <ligand>
        <name>CTP</name>
        <dbReference type="ChEBI" id="CHEBI:37563"/>
    </ligand>
</feature>
<feature type="binding site" evidence="1">
    <location>
        <position position="65"/>
    </location>
    <ligand>
        <name>Mg(2+)</name>
        <dbReference type="ChEBI" id="CHEBI:18420"/>
    </ligand>
</feature>
<feature type="binding site" evidence="1">
    <location>
        <position position="67"/>
    </location>
    <ligand>
        <name>Mg(2+)</name>
        <dbReference type="ChEBI" id="CHEBI:18420"/>
    </ligand>
</feature>
<feature type="binding site" evidence="1">
    <location>
        <position position="119"/>
    </location>
    <ligand>
        <name>Mg(2+)</name>
        <dbReference type="ChEBI" id="CHEBI:18420"/>
    </ligand>
</feature>
<feature type="binding site" evidence="1">
    <location>
        <position position="142"/>
    </location>
    <ligand>
        <name>ATP</name>
        <dbReference type="ChEBI" id="CHEBI:30616"/>
    </ligand>
</feature>
<feature type="binding site" evidence="1">
    <location>
        <position position="142"/>
    </location>
    <ligand>
        <name>CTP</name>
        <dbReference type="ChEBI" id="CHEBI:37563"/>
    </ligand>
</feature>
<feature type="binding site" evidence="1">
    <location>
        <position position="161"/>
    </location>
    <ligand>
        <name>ATP</name>
        <dbReference type="ChEBI" id="CHEBI:30616"/>
    </ligand>
</feature>
<feature type="binding site" evidence="1">
    <location>
        <position position="161"/>
    </location>
    <ligand>
        <name>CTP</name>
        <dbReference type="ChEBI" id="CHEBI:37563"/>
    </ligand>
</feature>
<feature type="binding site" evidence="1">
    <location>
        <position position="170"/>
    </location>
    <ligand>
        <name>ATP</name>
        <dbReference type="ChEBI" id="CHEBI:30616"/>
    </ligand>
</feature>
<feature type="binding site" evidence="1">
    <location>
        <position position="170"/>
    </location>
    <ligand>
        <name>CTP</name>
        <dbReference type="ChEBI" id="CHEBI:37563"/>
    </ligand>
</feature>
<gene>
    <name evidence="1" type="primary">cca</name>
    <name type="ordered locus">PH0101</name>
</gene>
<organism>
    <name type="scientific">Pyrococcus horikoshii (strain ATCC 700860 / DSM 12428 / JCM 9974 / NBRC 100139 / OT-3)</name>
    <dbReference type="NCBI Taxonomy" id="70601"/>
    <lineage>
        <taxon>Archaea</taxon>
        <taxon>Methanobacteriati</taxon>
        <taxon>Methanobacteriota</taxon>
        <taxon>Thermococci</taxon>
        <taxon>Thermococcales</taxon>
        <taxon>Thermococcaceae</taxon>
        <taxon>Pyrococcus</taxon>
    </lineage>
</organism>
<name>CCA_PYRHO</name>
<sequence>MDIEDVIAEVLQRIVPTKEEENFVSTLMEEIKEKTEETIEELNLDAKPYFVGSLAKDTYLAGDHDVDLFIAFPLDTSLEELREKGLELGKVLGERLGKYEIAYAEHPYVRAEYKGIRVDIVPCYNVKNWKDVRTAVDRSILHTHWVLENIKGKNNEVRLLKRFLKGINAYGSEIYIRGFSGYLAEILIIEFGSFLNVLEKSDFMLRKKIIDPEDWMKRESEITMKTIKREVGEDKPLIVIDPVDPRRNVAANLSWERYGLFYFKSQEFLKEPSTEFFFPRKKIGNYLSALRSRKTHLITLTFNPPKLVDDILLPQVERTAKGIKRQLELEGFKVLGYDYGREFIFLEVDRLEREGIKVKRGPLYFTQHGKRFYEKNDIVWIEGKELASEKPISTFIVDVLEEILRKGQFSAGKNIKDAIVKGDILVDFVPKELSKDAYLFLSREKFRVK</sequence>
<evidence type="ECO:0000255" key="1">
    <source>
        <dbReference type="HAMAP-Rule" id="MF_01264"/>
    </source>
</evidence>
<evidence type="ECO:0000305" key="2"/>